<organism>
    <name type="scientific">Gloydius halys</name>
    <name type="common">Chinese water mocassin</name>
    <name type="synonym">Agkistrodon halys</name>
    <dbReference type="NCBI Taxonomy" id="8714"/>
    <lineage>
        <taxon>Eukaryota</taxon>
        <taxon>Metazoa</taxon>
        <taxon>Chordata</taxon>
        <taxon>Craniata</taxon>
        <taxon>Vertebrata</taxon>
        <taxon>Euteleostomi</taxon>
        <taxon>Lepidosauria</taxon>
        <taxon>Squamata</taxon>
        <taxon>Bifurcata</taxon>
        <taxon>Unidentata</taxon>
        <taxon>Episquamata</taxon>
        <taxon>Toxicofera</taxon>
        <taxon>Serpentes</taxon>
        <taxon>Colubroidea</taxon>
        <taxon>Viperidae</taxon>
        <taxon>Crotalinae</taxon>
        <taxon>Gloydius</taxon>
    </lineage>
</organism>
<accession>O42191</accession>
<comment type="function">
    <text evidence="1">PLA2 catalyzes the calcium-dependent hydrolysis of the 2-acyl groups in 3-sn-phosphoglycerides.</text>
</comment>
<comment type="catalytic activity">
    <reaction evidence="3 4">
        <text>a 1,2-diacyl-sn-glycero-3-phosphocholine + H2O = a 1-acyl-sn-glycero-3-phosphocholine + a fatty acid + H(+)</text>
        <dbReference type="Rhea" id="RHEA:15801"/>
        <dbReference type="ChEBI" id="CHEBI:15377"/>
        <dbReference type="ChEBI" id="CHEBI:15378"/>
        <dbReference type="ChEBI" id="CHEBI:28868"/>
        <dbReference type="ChEBI" id="CHEBI:57643"/>
        <dbReference type="ChEBI" id="CHEBI:58168"/>
        <dbReference type="EC" id="3.1.1.4"/>
    </reaction>
</comment>
<comment type="cofactor">
    <cofactor evidence="1">
        <name>Ca(2+)</name>
        <dbReference type="ChEBI" id="CHEBI:29108"/>
    </cofactor>
    <text evidence="1">Binds 1 Ca(2+) ion.</text>
</comment>
<comment type="subcellular location">
    <subcellularLocation>
        <location>Secreted</location>
    </subcellularLocation>
</comment>
<comment type="tissue specificity">
    <text>Expressed by the venom gland.</text>
</comment>
<comment type="similarity">
    <text evidence="6">Belongs to the phospholipase A2 family. Group II subfamily. D49 sub-subfamily.</text>
</comment>
<comment type="sequence caution" evidence="8">
    <conflict type="miscellaneous discrepancy">
        <sequence resource="EMBL-CDS" id="AAB71848"/>
    </conflict>
    <text>The sequence shown is that displayed in the paper.</text>
</comment>
<evidence type="ECO:0000250" key="1"/>
<evidence type="ECO:0000250" key="2">
    <source>
        <dbReference type="UniProtKB" id="P06859"/>
    </source>
</evidence>
<evidence type="ECO:0000255" key="3">
    <source>
        <dbReference type="PROSITE-ProRule" id="PRU10035"/>
    </source>
</evidence>
<evidence type="ECO:0000255" key="4">
    <source>
        <dbReference type="PROSITE-ProRule" id="PRU10036"/>
    </source>
</evidence>
<evidence type="ECO:0000269" key="5">
    <source>
    </source>
</evidence>
<evidence type="ECO:0000305" key="6"/>
<evidence type="ECO:0000305" key="7">
    <source>
    </source>
</evidence>
<evidence type="ECO:0000305" key="8">
    <source>
    </source>
</evidence>
<evidence type="ECO:0007744" key="9">
    <source>
        <dbReference type="PDB" id="1M8R"/>
    </source>
</evidence>
<evidence type="ECO:0007829" key="10">
    <source>
        <dbReference type="PDB" id="1M8R"/>
    </source>
</evidence>
<feature type="chain" id="PRO_0000161602" description="Acidic phospholipase A2 A">
    <location>
        <begin position="1"/>
        <end position="124"/>
    </location>
</feature>
<feature type="active site" evidence="2">
    <location>
        <position position="47"/>
    </location>
</feature>
<feature type="active site" evidence="2">
    <location>
        <position position="89"/>
    </location>
</feature>
<feature type="binding site" evidence="7 9">
    <location>
        <position position="27"/>
    </location>
    <ligand>
        <name>Ca(2+)</name>
        <dbReference type="ChEBI" id="CHEBI:29108"/>
    </ligand>
</feature>
<feature type="binding site" evidence="7 9">
    <location>
        <position position="29"/>
    </location>
    <ligand>
        <name>Ca(2+)</name>
        <dbReference type="ChEBI" id="CHEBI:29108"/>
    </ligand>
</feature>
<feature type="binding site" evidence="7 9">
    <location>
        <position position="31"/>
    </location>
    <ligand>
        <name>Ca(2+)</name>
        <dbReference type="ChEBI" id="CHEBI:29108"/>
    </ligand>
</feature>
<feature type="binding site" evidence="7 9">
    <location>
        <position position="48"/>
    </location>
    <ligand>
        <name>Ca(2+)</name>
        <dbReference type="ChEBI" id="CHEBI:29108"/>
    </ligand>
</feature>
<feature type="disulfide bond" evidence="5 9">
    <location>
        <begin position="26"/>
        <end position="116"/>
    </location>
</feature>
<feature type="disulfide bond" evidence="5 9">
    <location>
        <begin position="28"/>
        <end position="44"/>
    </location>
</feature>
<feature type="disulfide bond" evidence="5 9">
    <location>
        <begin position="43"/>
        <end position="95"/>
    </location>
</feature>
<feature type="disulfide bond" evidence="5 9">
    <location>
        <begin position="49"/>
        <end position="124"/>
    </location>
</feature>
<feature type="disulfide bond" evidence="5 9">
    <location>
        <begin position="50"/>
        <end position="88"/>
    </location>
</feature>
<feature type="disulfide bond" evidence="5 9">
    <location>
        <begin position="57"/>
        <end position="81"/>
    </location>
</feature>
<feature type="disulfide bond" evidence="5 9">
    <location>
        <begin position="75"/>
        <end position="86"/>
    </location>
</feature>
<feature type="helix" evidence="10">
    <location>
        <begin position="2"/>
        <end position="12"/>
    </location>
</feature>
<feature type="helix" evidence="10">
    <location>
        <begin position="17"/>
        <end position="20"/>
    </location>
</feature>
<feature type="strand" evidence="10">
    <location>
        <begin position="21"/>
        <end position="24"/>
    </location>
</feature>
<feature type="turn" evidence="10">
    <location>
        <begin position="25"/>
        <end position="27"/>
    </location>
</feature>
<feature type="strand" evidence="10">
    <location>
        <begin position="28"/>
        <end position="31"/>
    </location>
</feature>
<feature type="helix" evidence="10">
    <location>
        <begin position="39"/>
        <end position="52"/>
    </location>
</feature>
<feature type="turn" evidence="10">
    <location>
        <begin position="59"/>
        <end position="61"/>
    </location>
</feature>
<feature type="strand" evidence="10">
    <location>
        <begin position="65"/>
        <end position="69"/>
    </location>
</feature>
<feature type="strand" evidence="10">
    <location>
        <begin position="72"/>
        <end position="76"/>
    </location>
</feature>
<feature type="helix" evidence="10">
    <location>
        <begin position="80"/>
        <end position="98"/>
    </location>
</feature>
<feature type="helix" evidence="10">
    <location>
        <begin position="99"/>
        <end position="102"/>
    </location>
</feature>
<feature type="helix" evidence="10">
    <location>
        <begin position="105"/>
        <end position="108"/>
    </location>
</feature>
<feature type="helix" evidence="10">
    <location>
        <begin position="118"/>
        <end position="120"/>
    </location>
</feature>
<proteinExistence type="evidence at protein level"/>
<keyword id="KW-0002">3D-structure</keyword>
<keyword id="KW-0106">Calcium</keyword>
<keyword id="KW-1015">Disulfide bond</keyword>
<keyword id="KW-0378">Hydrolase</keyword>
<keyword id="KW-0442">Lipid degradation</keyword>
<keyword id="KW-0443">Lipid metabolism</keyword>
<keyword id="KW-0479">Metal-binding</keyword>
<keyword id="KW-0964">Secreted</keyword>
<name>PA2A7_GLOHA</name>
<dbReference type="EC" id="3.1.1.4"/>
<dbReference type="EMBL" id="AF015246">
    <property type="protein sequence ID" value="AAB71848.1"/>
    <property type="status" value="ALT_SEQ"/>
    <property type="molecule type" value="mRNA"/>
</dbReference>
<dbReference type="PDB" id="1M8R">
    <property type="method" value="X-ray"/>
    <property type="resolution" value="1.90 A"/>
    <property type="chains" value="A=1-124"/>
</dbReference>
<dbReference type="PDB" id="1M8S">
    <property type="method" value="X-ray"/>
    <property type="resolution" value="1.90 A"/>
    <property type="chains" value="A=1-124"/>
</dbReference>
<dbReference type="PDBsum" id="1M8R"/>
<dbReference type="PDBsum" id="1M8S"/>
<dbReference type="SMR" id="O42191"/>
<dbReference type="EvolutionaryTrace" id="O42191"/>
<dbReference type="GO" id="GO:0005576">
    <property type="term" value="C:extracellular region"/>
    <property type="evidence" value="ECO:0007669"/>
    <property type="project" value="UniProtKB-SubCell"/>
</dbReference>
<dbReference type="GO" id="GO:0005509">
    <property type="term" value="F:calcium ion binding"/>
    <property type="evidence" value="ECO:0007669"/>
    <property type="project" value="InterPro"/>
</dbReference>
<dbReference type="GO" id="GO:0047498">
    <property type="term" value="F:calcium-dependent phospholipase A2 activity"/>
    <property type="evidence" value="ECO:0007669"/>
    <property type="project" value="TreeGrafter"/>
</dbReference>
<dbReference type="GO" id="GO:0005543">
    <property type="term" value="F:phospholipid binding"/>
    <property type="evidence" value="ECO:0007669"/>
    <property type="project" value="TreeGrafter"/>
</dbReference>
<dbReference type="GO" id="GO:0050482">
    <property type="term" value="P:arachidonate secretion"/>
    <property type="evidence" value="ECO:0007669"/>
    <property type="project" value="InterPro"/>
</dbReference>
<dbReference type="GO" id="GO:0016042">
    <property type="term" value="P:lipid catabolic process"/>
    <property type="evidence" value="ECO:0007669"/>
    <property type="project" value="UniProtKB-KW"/>
</dbReference>
<dbReference type="GO" id="GO:0006644">
    <property type="term" value="P:phospholipid metabolic process"/>
    <property type="evidence" value="ECO:0007669"/>
    <property type="project" value="InterPro"/>
</dbReference>
<dbReference type="CDD" id="cd00125">
    <property type="entry name" value="PLA2c"/>
    <property type="match status" value="1"/>
</dbReference>
<dbReference type="FunFam" id="1.20.90.10:FF:000001">
    <property type="entry name" value="Basic phospholipase A2 homolog"/>
    <property type="match status" value="1"/>
</dbReference>
<dbReference type="Gene3D" id="1.20.90.10">
    <property type="entry name" value="Phospholipase A2 domain"/>
    <property type="match status" value="1"/>
</dbReference>
<dbReference type="InterPro" id="IPR001211">
    <property type="entry name" value="PLipase_A2"/>
</dbReference>
<dbReference type="InterPro" id="IPR033112">
    <property type="entry name" value="PLipase_A2_Asp_AS"/>
</dbReference>
<dbReference type="InterPro" id="IPR016090">
    <property type="entry name" value="PLipase_A2_dom"/>
</dbReference>
<dbReference type="InterPro" id="IPR036444">
    <property type="entry name" value="PLipase_A2_dom_sf"/>
</dbReference>
<dbReference type="InterPro" id="IPR033113">
    <property type="entry name" value="PLipase_A2_His_AS"/>
</dbReference>
<dbReference type="PANTHER" id="PTHR11716:SF101">
    <property type="entry name" value="BASIC PHOSPHOLIPASE A2 PA-11-LIKE"/>
    <property type="match status" value="1"/>
</dbReference>
<dbReference type="PANTHER" id="PTHR11716">
    <property type="entry name" value="PHOSPHOLIPASE A2 FAMILY MEMBER"/>
    <property type="match status" value="1"/>
</dbReference>
<dbReference type="Pfam" id="PF00068">
    <property type="entry name" value="Phospholip_A2_1"/>
    <property type="match status" value="1"/>
</dbReference>
<dbReference type="PRINTS" id="PR00389">
    <property type="entry name" value="PHPHLIPASEA2"/>
</dbReference>
<dbReference type="SMART" id="SM00085">
    <property type="entry name" value="PA2c"/>
    <property type="match status" value="1"/>
</dbReference>
<dbReference type="SUPFAM" id="SSF48619">
    <property type="entry name" value="Phospholipase A2, PLA2"/>
    <property type="match status" value="1"/>
</dbReference>
<dbReference type="PROSITE" id="PS00119">
    <property type="entry name" value="PA2_ASP"/>
    <property type="match status" value="1"/>
</dbReference>
<dbReference type="PROSITE" id="PS00118">
    <property type="entry name" value="PA2_HIS"/>
    <property type="match status" value="1"/>
</dbReference>
<protein>
    <recommendedName>
        <fullName>Acidic phospholipase A2 A</fullName>
        <shortName>svPLA2</shortName>
        <ecNumber>3.1.1.4</ecNumber>
    </recommendedName>
    <alternativeName>
        <fullName>Phosphatidylcholine 2-acylhydrolase</fullName>
    </alternativeName>
</protein>
<sequence>SLLQFETLIMKVAKKSGMVWYSNYGCYCGWGGQGRPQDATDRCCFVHDCCYGKVTGCDPKMDVYSFSEENGDIVCGGDDPCKKEICECDRAAAICFRDNLNTYNDKKYWAFGAKNCPQEESEPC</sequence>
<reference key="1">
    <citation type="journal article" date="1998" name="Toxicon">
        <title>Diversity of cDNAs encoding phospholipase A2 from Agkistrodon halys pallas venom, and its expression in E. coli.</title>
        <authorList>
            <person name="Pan H."/>
            <person name="Liu X.-L."/>
            <person name="Ou-Yang L.-L."/>
            <person name="Yang G.-Z."/>
            <person name="Zhou Y.-C."/>
            <person name="Li Z.-P."/>
            <person name="Wu X.-F."/>
        </authorList>
    </citation>
    <scope>NUCLEOTIDE SEQUENCE [MRNA]</scope>
    <source>
        <tissue>Venom gland</tissue>
    </source>
</reference>
<reference key="2">
    <citation type="journal article" date="2003" name="Biochem. Biophys. Res. Commun.">
        <title>Structures of cadmium-binding acidic phospholipase A2 from the venom of Agkistrodon halys pallas at 1.9-A resolution.</title>
        <authorList>
            <person name="Xu S."/>
            <person name="Gu L."/>
            <person name="Jiang T."/>
            <person name="Zhou Y."/>
            <person name="Lin Z."/>
        </authorList>
    </citation>
    <scope>X-RAY CRYSTALLOGRAPHY (1.9 ANGSTROMS) IN COMPLEX WITH CADMIUM IONS</scope>
    <scope>DISULFIDE BONDS</scope>
    <source>
        <tissue>Venom</tissue>
    </source>
</reference>